<name>EFTS_META1</name>
<feature type="chain" id="PRO_1000117590" description="Elongation factor Ts">
    <location>
        <begin position="1"/>
        <end position="292"/>
    </location>
</feature>
<feature type="region of interest" description="Involved in Mg(2+) ion dislocation from EF-Tu" evidence="1">
    <location>
        <begin position="79"/>
        <end position="82"/>
    </location>
</feature>
<reference key="1">
    <citation type="journal article" date="2008" name="Infect. Immun.">
        <title>Genome of Mycoplasma arthritidis.</title>
        <authorList>
            <person name="Dybvig K."/>
            <person name="Zuhua C."/>
            <person name="Lao P."/>
            <person name="Jordan D.S."/>
            <person name="French C.T."/>
            <person name="Tu A.H."/>
            <person name="Loraine A.E."/>
        </authorList>
    </citation>
    <scope>NUCLEOTIDE SEQUENCE [LARGE SCALE GENOMIC DNA]</scope>
    <source>
        <strain>158L3-1</strain>
    </source>
</reference>
<protein>
    <recommendedName>
        <fullName evidence="1">Elongation factor Ts</fullName>
        <shortName evidence="1">EF-Ts</shortName>
    </recommendedName>
</protein>
<gene>
    <name evidence="1" type="primary">tsf</name>
    <name type="ordered locus">MARTH_orf063</name>
</gene>
<dbReference type="EMBL" id="CP001047">
    <property type="protein sequence ID" value="ACF07019.1"/>
    <property type="molecule type" value="Genomic_DNA"/>
</dbReference>
<dbReference type="RefSeq" id="WP_012497976.1">
    <property type="nucleotide sequence ID" value="NC_011025.1"/>
</dbReference>
<dbReference type="SMR" id="B3PLW7"/>
<dbReference type="STRING" id="243272.MARTH_orf063"/>
<dbReference type="KEGG" id="mat:MARTH_orf063"/>
<dbReference type="eggNOG" id="COG0264">
    <property type="taxonomic scope" value="Bacteria"/>
</dbReference>
<dbReference type="HOGENOM" id="CLU_047155_0_2_14"/>
<dbReference type="Proteomes" id="UP000008812">
    <property type="component" value="Chromosome"/>
</dbReference>
<dbReference type="GO" id="GO:0005737">
    <property type="term" value="C:cytoplasm"/>
    <property type="evidence" value="ECO:0007669"/>
    <property type="project" value="UniProtKB-SubCell"/>
</dbReference>
<dbReference type="GO" id="GO:0003746">
    <property type="term" value="F:translation elongation factor activity"/>
    <property type="evidence" value="ECO:0007669"/>
    <property type="project" value="UniProtKB-UniRule"/>
</dbReference>
<dbReference type="CDD" id="cd14275">
    <property type="entry name" value="UBA_EF-Ts"/>
    <property type="match status" value="1"/>
</dbReference>
<dbReference type="FunFam" id="1.10.8.10:FF:000001">
    <property type="entry name" value="Elongation factor Ts"/>
    <property type="match status" value="1"/>
</dbReference>
<dbReference type="Gene3D" id="1.10.286.20">
    <property type="match status" value="1"/>
</dbReference>
<dbReference type="Gene3D" id="1.10.8.10">
    <property type="entry name" value="DNA helicase RuvA subunit, C-terminal domain"/>
    <property type="match status" value="1"/>
</dbReference>
<dbReference type="Gene3D" id="3.30.479.20">
    <property type="entry name" value="Elongation factor Ts, dimerisation domain"/>
    <property type="match status" value="2"/>
</dbReference>
<dbReference type="HAMAP" id="MF_00050">
    <property type="entry name" value="EF_Ts"/>
    <property type="match status" value="1"/>
</dbReference>
<dbReference type="InterPro" id="IPR036402">
    <property type="entry name" value="EF-Ts_dimer_sf"/>
</dbReference>
<dbReference type="InterPro" id="IPR001816">
    <property type="entry name" value="Transl_elong_EFTs/EF1B"/>
</dbReference>
<dbReference type="InterPro" id="IPR014039">
    <property type="entry name" value="Transl_elong_EFTs/EF1B_dimer"/>
</dbReference>
<dbReference type="InterPro" id="IPR018101">
    <property type="entry name" value="Transl_elong_Ts_CS"/>
</dbReference>
<dbReference type="InterPro" id="IPR009060">
    <property type="entry name" value="UBA-like_sf"/>
</dbReference>
<dbReference type="NCBIfam" id="TIGR00116">
    <property type="entry name" value="tsf"/>
    <property type="match status" value="1"/>
</dbReference>
<dbReference type="PANTHER" id="PTHR11741">
    <property type="entry name" value="ELONGATION FACTOR TS"/>
    <property type="match status" value="1"/>
</dbReference>
<dbReference type="PANTHER" id="PTHR11741:SF0">
    <property type="entry name" value="ELONGATION FACTOR TS, MITOCHONDRIAL"/>
    <property type="match status" value="1"/>
</dbReference>
<dbReference type="Pfam" id="PF00889">
    <property type="entry name" value="EF_TS"/>
    <property type="match status" value="1"/>
</dbReference>
<dbReference type="SUPFAM" id="SSF54713">
    <property type="entry name" value="Elongation factor Ts (EF-Ts), dimerisation domain"/>
    <property type="match status" value="2"/>
</dbReference>
<dbReference type="SUPFAM" id="SSF46934">
    <property type="entry name" value="UBA-like"/>
    <property type="match status" value="1"/>
</dbReference>
<dbReference type="PROSITE" id="PS01126">
    <property type="entry name" value="EF_TS_1"/>
    <property type="match status" value="1"/>
</dbReference>
<dbReference type="PROSITE" id="PS01127">
    <property type="entry name" value="EF_TS_2"/>
    <property type="match status" value="1"/>
</dbReference>
<keyword id="KW-0963">Cytoplasm</keyword>
<keyword id="KW-0251">Elongation factor</keyword>
<keyword id="KW-0648">Protein biosynthesis</keyword>
<keyword id="KW-1185">Reference proteome</keyword>
<sequence length="292" mass="32428">MSPDLKKLKELRERTNSGLLDCKNALEATDNDIEKAIKWLQENGIIKAAKKSARIAAEGITKAYIKDNVAVLFELNAETDFVARNQLFIDLANKIQDALAANDFSDIEAANKVKIDGMTIEESCQDLTAKIGEKITLRRAEKFVAKPGEVVAGYTHANSRVADIAIAKGANQEALRHVTMHIAALNPSHLFESCLPKAQHDEIVNRINSDPKLANKPEKIQESMKAGMLKKEFNELGVLMFQPFVMEDSKTVAKYLEENQLTLLDATRYEVGEGIEKKVVDFAAEVAEQMKQ</sequence>
<evidence type="ECO:0000255" key="1">
    <source>
        <dbReference type="HAMAP-Rule" id="MF_00050"/>
    </source>
</evidence>
<accession>B3PLW7</accession>
<organism>
    <name type="scientific">Metamycoplasma arthritidis (strain 158L3-1)</name>
    <name type="common">Mycoplasma arthritidis</name>
    <dbReference type="NCBI Taxonomy" id="243272"/>
    <lineage>
        <taxon>Bacteria</taxon>
        <taxon>Bacillati</taxon>
        <taxon>Mycoplasmatota</taxon>
        <taxon>Mycoplasmoidales</taxon>
        <taxon>Metamycoplasmataceae</taxon>
        <taxon>Metamycoplasma</taxon>
    </lineage>
</organism>
<comment type="function">
    <text evidence="1">Associates with the EF-Tu.GDP complex and induces the exchange of GDP to GTP. It remains bound to the aminoacyl-tRNA.EF-Tu.GTP complex up to the GTP hydrolysis stage on the ribosome.</text>
</comment>
<comment type="subcellular location">
    <subcellularLocation>
        <location evidence="1">Cytoplasm</location>
    </subcellularLocation>
</comment>
<comment type="similarity">
    <text evidence="1">Belongs to the EF-Ts family.</text>
</comment>
<proteinExistence type="inferred from homology"/>